<proteinExistence type="inferred from homology"/>
<keyword id="KW-0413">Isomerase</keyword>
<evidence type="ECO:0000255" key="1">
    <source>
        <dbReference type="HAMAP-Rule" id="MF_00170"/>
    </source>
</evidence>
<gene>
    <name evidence="1" type="primary">rpiA</name>
    <name type="ordered locus">BUsg_397</name>
</gene>
<comment type="function">
    <text evidence="1">Catalyzes the reversible conversion of ribose-5-phosphate to ribulose 5-phosphate.</text>
</comment>
<comment type="catalytic activity">
    <reaction evidence="1">
        <text>aldehydo-D-ribose 5-phosphate = D-ribulose 5-phosphate</text>
        <dbReference type="Rhea" id="RHEA:14657"/>
        <dbReference type="ChEBI" id="CHEBI:58121"/>
        <dbReference type="ChEBI" id="CHEBI:58273"/>
        <dbReference type="EC" id="5.3.1.6"/>
    </reaction>
</comment>
<comment type="pathway">
    <text evidence="1">Carbohydrate degradation; pentose phosphate pathway; D-ribose 5-phosphate from D-ribulose 5-phosphate (non-oxidative stage): step 1/1.</text>
</comment>
<comment type="subunit">
    <text evidence="1">Homodimer.</text>
</comment>
<comment type="similarity">
    <text evidence="1">Belongs to the ribose 5-phosphate isomerase family.</text>
</comment>
<feature type="chain" id="PRO_0000158399" description="Ribose-5-phosphate isomerase A">
    <location>
        <begin position="1"/>
        <end position="219"/>
    </location>
</feature>
<feature type="active site" description="Proton acceptor" evidence="1">
    <location>
        <position position="103"/>
    </location>
</feature>
<feature type="binding site" evidence="1">
    <location>
        <begin position="28"/>
        <end position="31"/>
    </location>
    <ligand>
        <name>substrate</name>
    </ligand>
</feature>
<feature type="binding site" evidence="1">
    <location>
        <begin position="81"/>
        <end position="84"/>
    </location>
    <ligand>
        <name>substrate</name>
    </ligand>
</feature>
<feature type="binding site" evidence="1">
    <location>
        <begin position="94"/>
        <end position="97"/>
    </location>
    <ligand>
        <name>substrate</name>
    </ligand>
</feature>
<feature type="binding site" evidence="1">
    <location>
        <position position="121"/>
    </location>
    <ligand>
        <name>substrate</name>
    </ligand>
</feature>
<accession>Q8K9E2</accession>
<organism>
    <name type="scientific">Buchnera aphidicola subsp. Schizaphis graminum (strain Sg)</name>
    <dbReference type="NCBI Taxonomy" id="198804"/>
    <lineage>
        <taxon>Bacteria</taxon>
        <taxon>Pseudomonadati</taxon>
        <taxon>Pseudomonadota</taxon>
        <taxon>Gammaproteobacteria</taxon>
        <taxon>Enterobacterales</taxon>
        <taxon>Erwiniaceae</taxon>
        <taxon>Buchnera</taxon>
    </lineage>
</organism>
<reference key="1">
    <citation type="journal article" date="2002" name="Science">
        <title>50 million years of genomic stasis in endosymbiotic bacteria.</title>
        <authorList>
            <person name="Tamas I."/>
            <person name="Klasson L."/>
            <person name="Canbaeck B."/>
            <person name="Naeslund A.K."/>
            <person name="Eriksson A.-S."/>
            <person name="Wernegreen J.J."/>
            <person name="Sandstroem J.P."/>
            <person name="Moran N.A."/>
            <person name="Andersson S.G.E."/>
        </authorList>
    </citation>
    <scope>NUCLEOTIDE SEQUENCE [LARGE SCALE GENOMIC DNA]</scope>
    <source>
        <strain>Sg</strain>
    </source>
</reference>
<protein>
    <recommendedName>
        <fullName evidence="1">Ribose-5-phosphate isomerase A</fullName>
        <ecNumber evidence="1">5.3.1.6</ecNumber>
    </recommendedName>
    <alternativeName>
        <fullName evidence="1">Phosphoriboisomerase A</fullName>
        <shortName evidence="1">PRI</shortName>
    </alternativeName>
</protein>
<name>RPIA_BUCAP</name>
<dbReference type="EC" id="5.3.1.6" evidence="1"/>
<dbReference type="EMBL" id="AE013218">
    <property type="protein sequence ID" value="AAM67948.1"/>
    <property type="molecule type" value="Genomic_DNA"/>
</dbReference>
<dbReference type="RefSeq" id="WP_011053915.1">
    <property type="nucleotide sequence ID" value="NC_004061.1"/>
</dbReference>
<dbReference type="SMR" id="Q8K9E2"/>
<dbReference type="STRING" id="198804.BUsg_397"/>
<dbReference type="GeneID" id="93003868"/>
<dbReference type="KEGG" id="bas:BUsg_397"/>
<dbReference type="eggNOG" id="COG0120">
    <property type="taxonomic scope" value="Bacteria"/>
</dbReference>
<dbReference type="HOGENOM" id="CLU_056590_1_1_6"/>
<dbReference type="UniPathway" id="UPA00115">
    <property type="reaction ID" value="UER00412"/>
</dbReference>
<dbReference type="Proteomes" id="UP000000416">
    <property type="component" value="Chromosome"/>
</dbReference>
<dbReference type="GO" id="GO:0005829">
    <property type="term" value="C:cytosol"/>
    <property type="evidence" value="ECO:0007669"/>
    <property type="project" value="TreeGrafter"/>
</dbReference>
<dbReference type="GO" id="GO:0004751">
    <property type="term" value="F:ribose-5-phosphate isomerase activity"/>
    <property type="evidence" value="ECO:0007669"/>
    <property type="project" value="UniProtKB-UniRule"/>
</dbReference>
<dbReference type="GO" id="GO:0006014">
    <property type="term" value="P:D-ribose metabolic process"/>
    <property type="evidence" value="ECO:0007669"/>
    <property type="project" value="TreeGrafter"/>
</dbReference>
<dbReference type="GO" id="GO:0009052">
    <property type="term" value="P:pentose-phosphate shunt, non-oxidative branch"/>
    <property type="evidence" value="ECO:0007669"/>
    <property type="project" value="UniProtKB-UniRule"/>
</dbReference>
<dbReference type="CDD" id="cd01398">
    <property type="entry name" value="RPI_A"/>
    <property type="match status" value="1"/>
</dbReference>
<dbReference type="FunFam" id="3.40.50.1360:FF:000001">
    <property type="entry name" value="Ribose-5-phosphate isomerase A"/>
    <property type="match status" value="1"/>
</dbReference>
<dbReference type="Gene3D" id="3.30.70.260">
    <property type="match status" value="1"/>
</dbReference>
<dbReference type="Gene3D" id="3.40.50.1360">
    <property type="match status" value="1"/>
</dbReference>
<dbReference type="HAMAP" id="MF_00170">
    <property type="entry name" value="Rib_5P_isom_A"/>
    <property type="match status" value="1"/>
</dbReference>
<dbReference type="InterPro" id="IPR037171">
    <property type="entry name" value="NagB/RpiA_transferase-like"/>
</dbReference>
<dbReference type="InterPro" id="IPR020672">
    <property type="entry name" value="Ribose5P_isomerase_typA_subgr"/>
</dbReference>
<dbReference type="InterPro" id="IPR004788">
    <property type="entry name" value="Ribose5P_isomerase_type_A"/>
</dbReference>
<dbReference type="NCBIfam" id="NF001924">
    <property type="entry name" value="PRK00702.1"/>
    <property type="match status" value="1"/>
</dbReference>
<dbReference type="NCBIfam" id="TIGR00021">
    <property type="entry name" value="rpiA"/>
    <property type="match status" value="1"/>
</dbReference>
<dbReference type="PANTHER" id="PTHR11934">
    <property type="entry name" value="RIBOSE-5-PHOSPHATE ISOMERASE"/>
    <property type="match status" value="1"/>
</dbReference>
<dbReference type="PANTHER" id="PTHR11934:SF0">
    <property type="entry name" value="RIBOSE-5-PHOSPHATE ISOMERASE"/>
    <property type="match status" value="1"/>
</dbReference>
<dbReference type="Pfam" id="PF06026">
    <property type="entry name" value="Rib_5-P_isom_A"/>
    <property type="match status" value="1"/>
</dbReference>
<dbReference type="SUPFAM" id="SSF75445">
    <property type="entry name" value="D-ribose-5-phosphate isomerase (RpiA), lid domain"/>
    <property type="match status" value="1"/>
</dbReference>
<dbReference type="SUPFAM" id="SSF100950">
    <property type="entry name" value="NagB/RpiA/CoA transferase-like"/>
    <property type="match status" value="1"/>
</dbReference>
<sequence length="219" mass="23750">MNLNELKKKAAWAALDYIYPGTVIGVGTGSTVFYFIQALSTVKHLISGAVSSSNSSTVLLKKNGIRVLDLNTFDFLEIYVDSADEINNDMQMIKGGGAALTKEKIIAAMSKKFVCIIDESKKVNILGTFPLPIEIIPIAFSYISKEILKIGGQPKLRENIITDNGNVIIDVYNLFINDPISVEKKINSLPGVVSVGLFASRVADVVLIGTQKGVEIIKN</sequence>